<protein>
    <recommendedName>
        <fullName evidence="1">Cardiolipin synthase</fullName>
        <shortName evidence="1">CL synthase</shortName>
        <ecNumber evidence="1">2.7.8.-</ecNumber>
    </recommendedName>
</protein>
<name>CLS_STAAM</name>
<proteinExistence type="inferred from homology"/>
<feature type="chain" id="PRO_0000201269" description="Cardiolipin synthase">
    <location>
        <begin position="1"/>
        <end position="494"/>
    </location>
</feature>
<feature type="transmembrane region" description="Helical" evidence="1">
    <location>
        <begin position="14"/>
        <end position="34"/>
    </location>
</feature>
<feature type="transmembrane region" description="Helical" evidence="1">
    <location>
        <begin position="45"/>
        <end position="65"/>
    </location>
</feature>
<feature type="domain" description="PLD phosphodiesterase 1" evidence="1">
    <location>
        <begin position="229"/>
        <end position="256"/>
    </location>
</feature>
<feature type="domain" description="PLD phosphodiesterase 2" evidence="1">
    <location>
        <begin position="407"/>
        <end position="434"/>
    </location>
</feature>
<feature type="active site" evidence="1">
    <location>
        <position position="234"/>
    </location>
</feature>
<feature type="active site" evidence="1">
    <location>
        <position position="236"/>
    </location>
</feature>
<feature type="active site" evidence="1">
    <location>
        <position position="241"/>
    </location>
</feature>
<feature type="active site" evidence="1">
    <location>
        <position position="412"/>
    </location>
</feature>
<feature type="active site" evidence="1">
    <location>
        <position position="414"/>
    </location>
</feature>
<feature type="active site" evidence="1">
    <location>
        <position position="419"/>
    </location>
</feature>
<reference key="1">
    <citation type="journal article" date="2001" name="Lancet">
        <title>Whole genome sequencing of meticillin-resistant Staphylococcus aureus.</title>
        <authorList>
            <person name="Kuroda M."/>
            <person name="Ohta T."/>
            <person name="Uchiyama I."/>
            <person name="Baba T."/>
            <person name="Yuzawa H."/>
            <person name="Kobayashi I."/>
            <person name="Cui L."/>
            <person name="Oguchi A."/>
            <person name="Aoki K."/>
            <person name="Nagai Y."/>
            <person name="Lian J.-Q."/>
            <person name="Ito T."/>
            <person name="Kanamori M."/>
            <person name="Matsumaru H."/>
            <person name="Maruyama A."/>
            <person name="Murakami H."/>
            <person name="Hosoyama A."/>
            <person name="Mizutani-Ui Y."/>
            <person name="Takahashi N.K."/>
            <person name="Sawano T."/>
            <person name="Inoue R."/>
            <person name="Kaito C."/>
            <person name="Sekimizu K."/>
            <person name="Hirakawa H."/>
            <person name="Kuhara S."/>
            <person name="Goto S."/>
            <person name="Yabuzaki J."/>
            <person name="Kanehisa M."/>
            <person name="Yamashita A."/>
            <person name="Oshima K."/>
            <person name="Furuya K."/>
            <person name="Yoshino C."/>
            <person name="Shiba T."/>
            <person name="Hattori M."/>
            <person name="Ogasawara N."/>
            <person name="Hayashi H."/>
            <person name="Hiramatsu K."/>
        </authorList>
    </citation>
    <scope>NUCLEOTIDE SEQUENCE [LARGE SCALE GENOMIC DNA]</scope>
    <source>
        <strain>Mu50 / ATCC 700699</strain>
    </source>
</reference>
<sequence>MIELLSIALKHSNIILNSIFIGAFILNLLFAFTIIFMERRSANSIWAWLLVLVFLPLFGFILYLLLGRQIQRDQIFKIDKEDKKGLELIVDEQLAALKNENFSNSNYQIVKFKEMIQMLLYNNAAFLTTDNDLKIYTDGQEKFDDLIQDIRNATDYIHFQYYIIQNDELGRTILNELGKKAEQGVEVKILYDDMGSRGLRKKGLRPFRNKGGHAEAFFPSKLPLINLRMNNRNHRKIVVIDGQIGYVGGFNVGDEYLGKSKKFGYWRDTHLRIVGDAVNALQLRFILDWNSQATRDHISYDDRYFPDVNSGGTIGVQIASSGPDEEWEQIKYGYLKMISSAKKSIYIQSPYFIPDQAFLDSIKIAALGGVDVNIMIPNKPDHPFVFWATLKNAASLLDAGVKVFHYDNGFLHSKTLVIDDEIASVGTANMDHRSFTLNFEVNAFIYDQQIAKKLKQAFIDDLAVSSELTKARYAKRSLWIKFKEGISQLLSPIL</sequence>
<gene>
    <name type="primary">cls</name>
    <name type="ordered locus">SAV2088</name>
</gene>
<keyword id="KW-1003">Cell membrane</keyword>
<keyword id="KW-0444">Lipid biosynthesis</keyword>
<keyword id="KW-0443">Lipid metabolism</keyword>
<keyword id="KW-0472">Membrane</keyword>
<keyword id="KW-0594">Phospholipid biosynthesis</keyword>
<keyword id="KW-1208">Phospholipid metabolism</keyword>
<keyword id="KW-0677">Repeat</keyword>
<keyword id="KW-0808">Transferase</keyword>
<keyword id="KW-0812">Transmembrane</keyword>
<keyword id="KW-1133">Transmembrane helix</keyword>
<organism>
    <name type="scientific">Staphylococcus aureus (strain Mu50 / ATCC 700699)</name>
    <dbReference type="NCBI Taxonomy" id="158878"/>
    <lineage>
        <taxon>Bacteria</taxon>
        <taxon>Bacillati</taxon>
        <taxon>Bacillota</taxon>
        <taxon>Bacilli</taxon>
        <taxon>Bacillales</taxon>
        <taxon>Staphylococcaceae</taxon>
        <taxon>Staphylococcus</taxon>
    </lineage>
</organism>
<evidence type="ECO:0000255" key="1">
    <source>
        <dbReference type="HAMAP-Rule" id="MF_01916"/>
    </source>
</evidence>
<comment type="function">
    <text evidence="1">Catalyzes the reversible phosphatidyl group transfer from one phosphatidylglycerol molecule to another to form cardiolipin (CL) (diphosphatidylglycerol) and glycerol.</text>
</comment>
<comment type="catalytic activity">
    <reaction evidence="1">
        <text>2 a 1,2-diacyl-sn-glycero-3-phospho-(1'-sn-glycerol) = a cardiolipin + glycerol</text>
        <dbReference type="Rhea" id="RHEA:31451"/>
        <dbReference type="ChEBI" id="CHEBI:17754"/>
        <dbReference type="ChEBI" id="CHEBI:62237"/>
        <dbReference type="ChEBI" id="CHEBI:64716"/>
    </reaction>
</comment>
<comment type="subcellular location">
    <subcellularLocation>
        <location evidence="1">Cell membrane</location>
        <topology evidence="1">Multi-pass membrane protein</topology>
    </subcellularLocation>
</comment>
<comment type="similarity">
    <text evidence="1">Belongs to the phospholipase D family. Cardiolipin synthase subfamily.</text>
</comment>
<dbReference type="EC" id="2.7.8.-" evidence="1"/>
<dbReference type="EMBL" id="BA000017">
    <property type="protein sequence ID" value="BAB58250.1"/>
    <property type="molecule type" value="Genomic_DNA"/>
</dbReference>
<dbReference type="RefSeq" id="WP_000571549.1">
    <property type="nucleotide sequence ID" value="NC_002758.2"/>
</dbReference>
<dbReference type="SMR" id="P63800"/>
<dbReference type="DNASU" id="1122105"/>
<dbReference type="KEGG" id="sav:SAV2088"/>
<dbReference type="HOGENOM" id="CLU_038053_1_1_9"/>
<dbReference type="PhylomeDB" id="P63800"/>
<dbReference type="Proteomes" id="UP000002481">
    <property type="component" value="Chromosome"/>
</dbReference>
<dbReference type="GO" id="GO:0005886">
    <property type="term" value="C:plasma membrane"/>
    <property type="evidence" value="ECO:0007669"/>
    <property type="project" value="UniProtKB-SubCell"/>
</dbReference>
<dbReference type="GO" id="GO:0008808">
    <property type="term" value="F:cardiolipin synthase activity"/>
    <property type="evidence" value="ECO:0007669"/>
    <property type="project" value="InterPro"/>
</dbReference>
<dbReference type="GO" id="GO:0032049">
    <property type="term" value="P:cardiolipin biosynthetic process"/>
    <property type="evidence" value="ECO:0007669"/>
    <property type="project" value="InterPro"/>
</dbReference>
<dbReference type="CDD" id="cd09110">
    <property type="entry name" value="PLDc_CLS_1"/>
    <property type="match status" value="1"/>
</dbReference>
<dbReference type="CDD" id="cd09112">
    <property type="entry name" value="PLDc_CLS_2"/>
    <property type="match status" value="1"/>
</dbReference>
<dbReference type="FunFam" id="3.30.870.10:FF:000014">
    <property type="entry name" value="Cardiolipin synthase"/>
    <property type="match status" value="1"/>
</dbReference>
<dbReference type="FunFam" id="3.30.870.10:FF:000021">
    <property type="entry name" value="Cardiolipin synthase"/>
    <property type="match status" value="1"/>
</dbReference>
<dbReference type="Gene3D" id="3.30.870.10">
    <property type="entry name" value="Endonuclease Chain A"/>
    <property type="match status" value="2"/>
</dbReference>
<dbReference type="HAMAP" id="MF_01916">
    <property type="entry name" value="Cardiolipin_synth_Cls"/>
    <property type="match status" value="1"/>
</dbReference>
<dbReference type="InterPro" id="IPR030874">
    <property type="entry name" value="Cardiolipin_synth_Firmi"/>
</dbReference>
<dbReference type="InterPro" id="IPR022924">
    <property type="entry name" value="Cardiolipin_synthase"/>
</dbReference>
<dbReference type="InterPro" id="IPR027379">
    <property type="entry name" value="CLS_N"/>
</dbReference>
<dbReference type="InterPro" id="IPR025202">
    <property type="entry name" value="PLD-like_dom"/>
</dbReference>
<dbReference type="InterPro" id="IPR001736">
    <property type="entry name" value="PLipase_D/transphosphatidylase"/>
</dbReference>
<dbReference type="NCBIfam" id="TIGR04265">
    <property type="entry name" value="bac_cardiolipin"/>
    <property type="match status" value="1"/>
</dbReference>
<dbReference type="PANTHER" id="PTHR21248">
    <property type="entry name" value="CARDIOLIPIN SYNTHASE"/>
    <property type="match status" value="1"/>
</dbReference>
<dbReference type="PANTHER" id="PTHR21248:SF22">
    <property type="entry name" value="PHOSPHOLIPASE D"/>
    <property type="match status" value="1"/>
</dbReference>
<dbReference type="Pfam" id="PF13091">
    <property type="entry name" value="PLDc_2"/>
    <property type="match status" value="2"/>
</dbReference>
<dbReference type="Pfam" id="PF13396">
    <property type="entry name" value="PLDc_N"/>
    <property type="match status" value="1"/>
</dbReference>
<dbReference type="SMART" id="SM00155">
    <property type="entry name" value="PLDc"/>
    <property type="match status" value="2"/>
</dbReference>
<dbReference type="SUPFAM" id="SSF56024">
    <property type="entry name" value="Phospholipase D/nuclease"/>
    <property type="match status" value="2"/>
</dbReference>
<dbReference type="PROSITE" id="PS50035">
    <property type="entry name" value="PLD"/>
    <property type="match status" value="2"/>
</dbReference>
<accession>P63800</accession>
<accession>Q99SG9</accession>